<protein>
    <recommendedName>
        <fullName>Protein translocase subunit SecF</fullName>
    </recommendedName>
</protein>
<feature type="chain" id="PRO_0000272639" description="Protein translocase subunit SecF">
    <location>
        <begin position="1"/>
        <end position="308"/>
    </location>
</feature>
<feature type="transmembrane region" description="Helical" evidence="1">
    <location>
        <begin position="28"/>
        <end position="48"/>
    </location>
</feature>
<feature type="transmembrane region" description="Helical" evidence="1">
    <location>
        <begin position="140"/>
        <end position="160"/>
    </location>
</feature>
<feature type="transmembrane region" description="Helical" evidence="1">
    <location>
        <begin position="164"/>
        <end position="184"/>
    </location>
</feature>
<feature type="transmembrane region" description="Helical" evidence="1">
    <location>
        <begin position="194"/>
        <end position="214"/>
    </location>
</feature>
<feature type="transmembrane region" description="Helical" evidence="1">
    <location>
        <begin position="246"/>
        <end position="266"/>
    </location>
</feature>
<feature type="transmembrane region" description="Helical" evidence="1">
    <location>
        <begin position="272"/>
        <end position="292"/>
    </location>
</feature>
<gene>
    <name evidence="1" type="primary">secF</name>
    <name type="ordered locus">RF_1179</name>
</gene>
<comment type="function">
    <text evidence="1">Part of the Sec protein translocase complex. Interacts with the SecYEG preprotein conducting channel. SecDF uses the proton motive force (PMF) to complete protein translocation after the ATP-dependent function of SecA.</text>
</comment>
<comment type="subunit">
    <text evidence="1">Forms a complex with SecD. Part of the essential Sec protein translocation apparatus which comprises SecA, SecYEG and auxiliary proteins SecDF-YajC and YidC.</text>
</comment>
<comment type="subcellular location">
    <subcellularLocation>
        <location evidence="1">Cell inner membrane</location>
        <topology evidence="1">Multi-pass membrane protein</topology>
    </subcellularLocation>
</comment>
<comment type="similarity">
    <text evidence="1">Belongs to the SecD/SecF family. SecF subfamily.</text>
</comment>
<name>SECF_RICFE</name>
<accession>Q4UKA5</accession>
<keyword id="KW-0997">Cell inner membrane</keyword>
<keyword id="KW-1003">Cell membrane</keyword>
<keyword id="KW-0472">Membrane</keyword>
<keyword id="KW-0653">Protein transport</keyword>
<keyword id="KW-0811">Translocation</keyword>
<keyword id="KW-0812">Transmembrane</keyword>
<keyword id="KW-1133">Transmembrane helix</keyword>
<keyword id="KW-0813">Transport</keyword>
<organism>
    <name type="scientific">Rickettsia felis (strain ATCC VR-1525 / URRWXCal2)</name>
    <name type="common">Rickettsia azadi</name>
    <dbReference type="NCBI Taxonomy" id="315456"/>
    <lineage>
        <taxon>Bacteria</taxon>
        <taxon>Pseudomonadati</taxon>
        <taxon>Pseudomonadota</taxon>
        <taxon>Alphaproteobacteria</taxon>
        <taxon>Rickettsiales</taxon>
        <taxon>Rickettsiaceae</taxon>
        <taxon>Rickettsieae</taxon>
        <taxon>Rickettsia</taxon>
        <taxon>spotted fever group</taxon>
    </lineage>
</organism>
<proteinExistence type="inferred from homology"/>
<sequence length="308" mass="34945">MQIYPLRLLPNKIDFDFMNFKKVSYSFSIILSLISFIWIGIYKFNFGIDFAGGIVIEVRLDQAPDLPKMRGVLGELGIGEVVLQNFGSERDLSIRFGSSSEENLMKNIELIKASLQSNFPYKFEYRKVDFVGPQVGRQLIEAGAMAMLFSFLAIMVYIWVRFEWYFGLGILIALVHDVILALGFMSMTKLDFNLSTIAAVLTIIGYSVNDSVVIYDRIRENLRKYHKKNITEIINLSINETLSRTILTVITTLLANLALILFGGEAIRSFSVLVFFGIIAGTYSSIFISAPILTMFANRKFNKKVIER</sequence>
<reference key="1">
    <citation type="journal article" date="2005" name="PLoS Biol.">
        <title>The genome sequence of Rickettsia felis identifies the first putative conjugative plasmid in an obligate intracellular parasite.</title>
        <authorList>
            <person name="Ogata H."/>
            <person name="Renesto P."/>
            <person name="Audic S."/>
            <person name="Robert C."/>
            <person name="Blanc G."/>
            <person name="Fournier P.-E."/>
            <person name="Parinello H."/>
            <person name="Claverie J.-M."/>
            <person name="Raoult D."/>
        </authorList>
    </citation>
    <scope>NUCLEOTIDE SEQUENCE [LARGE SCALE GENOMIC DNA]</scope>
    <source>
        <strain>ATCC VR-1525 / URRWXCal2</strain>
    </source>
</reference>
<evidence type="ECO:0000255" key="1">
    <source>
        <dbReference type="HAMAP-Rule" id="MF_01464"/>
    </source>
</evidence>
<dbReference type="EMBL" id="CP000053">
    <property type="protein sequence ID" value="AAY62030.1"/>
    <property type="molecule type" value="Genomic_DNA"/>
</dbReference>
<dbReference type="SMR" id="Q4UKA5"/>
<dbReference type="STRING" id="315456.RF_1179"/>
<dbReference type="KEGG" id="rfe:RF_1179"/>
<dbReference type="eggNOG" id="COG0341">
    <property type="taxonomic scope" value="Bacteria"/>
</dbReference>
<dbReference type="HOGENOM" id="CLU_050012_1_1_5"/>
<dbReference type="OrthoDB" id="9774769at2"/>
<dbReference type="Proteomes" id="UP000008548">
    <property type="component" value="Chromosome"/>
</dbReference>
<dbReference type="GO" id="GO:0005886">
    <property type="term" value="C:plasma membrane"/>
    <property type="evidence" value="ECO:0007669"/>
    <property type="project" value="UniProtKB-SubCell"/>
</dbReference>
<dbReference type="GO" id="GO:0015450">
    <property type="term" value="F:protein-transporting ATPase activity"/>
    <property type="evidence" value="ECO:0007669"/>
    <property type="project" value="InterPro"/>
</dbReference>
<dbReference type="GO" id="GO:0065002">
    <property type="term" value="P:intracellular protein transmembrane transport"/>
    <property type="evidence" value="ECO:0007669"/>
    <property type="project" value="UniProtKB-UniRule"/>
</dbReference>
<dbReference type="GO" id="GO:0006605">
    <property type="term" value="P:protein targeting"/>
    <property type="evidence" value="ECO:0007669"/>
    <property type="project" value="UniProtKB-UniRule"/>
</dbReference>
<dbReference type="GO" id="GO:0043952">
    <property type="term" value="P:protein transport by the Sec complex"/>
    <property type="evidence" value="ECO:0007669"/>
    <property type="project" value="UniProtKB-UniRule"/>
</dbReference>
<dbReference type="FunFam" id="1.20.1640.10:FF:000024">
    <property type="entry name" value="Multifunctional fusion protein"/>
    <property type="match status" value="1"/>
</dbReference>
<dbReference type="Gene3D" id="1.20.1640.10">
    <property type="entry name" value="Multidrug efflux transporter AcrB transmembrane domain"/>
    <property type="match status" value="1"/>
</dbReference>
<dbReference type="HAMAP" id="MF_01464_B">
    <property type="entry name" value="SecF_B"/>
    <property type="match status" value="1"/>
</dbReference>
<dbReference type="InterPro" id="IPR022813">
    <property type="entry name" value="SecD/SecF_arch_bac"/>
</dbReference>
<dbReference type="InterPro" id="IPR022645">
    <property type="entry name" value="SecD/SecF_bac"/>
</dbReference>
<dbReference type="InterPro" id="IPR022646">
    <property type="entry name" value="SecD/SecF_CS"/>
</dbReference>
<dbReference type="InterPro" id="IPR048634">
    <property type="entry name" value="SecD_SecF_C"/>
</dbReference>
<dbReference type="InterPro" id="IPR055344">
    <property type="entry name" value="SecD_SecF_C_bact"/>
</dbReference>
<dbReference type="InterPro" id="IPR005665">
    <property type="entry name" value="SecF_bac"/>
</dbReference>
<dbReference type="InterPro" id="IPR000731">
    <property type="entry name" value="SSD"/>
</dbReference>
<dbReference type="NCBIfam" id="TIGR00916">
    <property type="entry name" value="2A0604s01"/>
    <property type="match status" value="1"/>
</dbReference>
<dbReference type="NCBIfam" id="TIGR00966">
    <property type="entry name" value="transloc_SecF"/>
    <property type="match status" value="1"/>
</dbReference>
<dbReference type="PANTHER" id="PTHR30081:SF8">
    <property type="entry name" value="PROTEIN TRANSLOCASE SUBUNIT SECF"/>
    <property type="match status" value="1"/>
</dbReference>
<dbReference type="PANTHER" id="PTHR30081">
    <property type="entry name" value="PROTEIN-EXPORT MEMBRANE PROTEIN SEC"/>
    <property type="match status" value="1"/>
</dbReference>
<dbReference type="Pfam" id="PF07549">
    <property type="entry name" value="Sec_GG"/>
    <property type="match status" value="1"/>
</dbReference>
<dbReference type="Pfam" id="PF02355">
    <property type="entry name" value="SecD_SecF_C"/>
    <property type="match status" value="1"/>
</dbReference>
<dbReference type="PRINTS" id="PR01755">
    <property type="entry name" value="SECFTRNLCASE"/>
</dbReference>
<dbReference type="SUPFAM" id="SSF82866">
    <property type="entry name" value="Multidrug efflux transporter AcrB transmembrane domain"/>
    <property type="match status" value="1"/>
</dbReference>
<dbReference type="PROSITE" id="PS50156">
    <property type="entry name" value="SSD"/>
    <property type="match status" value="1"/>
</dbReference>